<keyword id="KW-0963">Cytoplasm</keyword>
<keyword id="KW-0378">Hydrolase</keyword>
<keyword id="KW-0434">Leukotriene biosynthesis</keyword>
<keyword id="KW-0479">Metal-binding</keyword>
<keyword id="KW-0482">Metalloprotease</keyword>
<keyword id="KW-0539">Nucleus</keyword>
<keyword id="KW-0645">Protease</keyword>
<keyword id="KW-1185">Reference proteome</keyword>
<keyword id="KW-0862">Zinc</keyword>
<organism>
    <name type="scientific">Botryotinia fuckeliana (strain B05.10)</name>
    <name type="common">Noble rot fungus</name>
    <name type="synonym">Botrytis cinerea</name>
    <dbReference type="NCBI Taxonomy" id="332648"/>
    <lineage>
        <taxon>Eukaryota</taxon>
        <taxon>Fungi</taxon>
        <taxon>Dikarya</taxon>
        <taxon>Ascomycota</taxon>
        <taxon>Pezizomycotina</taxon>
        <taxon>Leotiomycetes</taxon>
        <taxon>Helotiales</taxon>
        <taxon>Sclerotiniaceae</taxon>
        <taxon>Botrytis</taxon>
    </lineage>
</organism>
<protein>
    <recommendedName>
        <fullName>Leukotriene A-4 hydrolase homolog</fullName>
        <shortName>LTA-4 hydrolase</shortName>
        <ecNumber>3.3.2.6</ecNumber>
    </recommendedName>
    <alternativeName>
        <fullName>Leukotriene A(4) hydrolase</fullName>
    </alternativeName>
</protein>
<reference key="1">
    <citation type="journal article" date="2011" name="PLoS Genet.">
        <title>Genomic analysis of the necrotrophic fungal pathogens Sclerotinia sclerotiorum and Botrytis cinerea.</title>
        <authorList>
            <person name="Amselem J."/>
            <person name="Cuomo C.A."/>
            <person name="van Kan J.A.L."/>
            <person name="Viaud M."/>
            <person name="Benito E.P."/>
            <person name="Couloux A."/>
            <person name="Coutinho P.M."/>
            <person name="de Vries R.P."/>
            <person name="Dyer P.S."/>
            <person name="Fillinger S."/>
            <person name="Fournier E."/>
            <person name="Gout L."/>
            <person name="Hahn M."/>
            <person name="Kohn L."/>
            <person name="Lapalu N."/>
            <person name="Plummer K.M."/>
            <person name="Pradier J.-M."/>
            <person name="Quevillon E."/>
            <person name="Sharon A."/>
            <person name="Simon A."/>
            <person name="ten Have A."/>
            <person name="Tudzynski B."/>
            <person name="Tudzynski P."/>
            <person name="Wincker P."/>
            <person name="Andrew M."/>
            <person name="Anthouard V."/>
            <person name="Beever R.E."/>
            <person name="Beffa R."/>
            <person name="Benoit I."/>
            <person name="Bouzid O."/>
            <person name="Brault B."/>
            <person name="Chen Z."/>
            <person name="Choquer M."/>
            <person name="Collemare J."/>
            <person name="Cotton P."/>
            <person name="Danchin E.G."/>
            <person name="Da Silva C."/>
            <person name="Gautier A."/>
            <person name="Giraud C."/>
            <person name="Giraud T."/>
            <person name="Gonzalez C."/>
            <person name="Grossetete S."/>
            <person name="Gueldener U."/>
            <person name="Henrissat B."/>
            <person name="Howlett B.J."/>
            <person name="Kodira C."/>
            <person name="Kretschmer M."/>
            <person name="Lappartient A."/>
            <person name="Leroch M."/>
            <person name="Levis C."/>
            <person name="Mauceli E."/>
            <person name="Neuveglise C."/>
            <person name="Oeser B."/>
            <person name="Pearson M."/>
            <person name="Poulain J."/>
            <person name="Poussereau N."/>
            <person name="Quesneville H."/>
            <person name="Rascle C."/>
            <person name="Schumacher J."/>
            <person name="Segurens B."/>
            <person name="Sexton A."/>
            <person name="Silva E."/>
            <person name="Sirven C."/>
            <person name="Soanes D.M."/>
            <person name="Talbot N.J."/>
            <person name="Templeton M."/>
            <person name="Yandava C."/>
            <person name="Yarden O."/>
            <person name="Zeng Q."/>
            <person name="Rollins J.A."/>
            <person name="Lebrun M.-H."/>
            <person name="Dickman M."/>
        </authorList>
    </citation>
    <scope>NUCLEOTIDE SEQUENCE [LARGE SCALE GENOMIC DNA]</scope>
    <source>
        <strain>B05.10</strain>
    </source>
</reference>
<reference key="2">
    <citation type="journal article" date="2012" name="Eukaryot. Cell">
        <title>Genome update of Botrytis cinerea strains B05.10 and T4.</title>
        <authorList>
            <person name="Staats M."/>
            <person name="van Kan J.A.L."/>
        </authorList>
    </citation>
    <scope>NUCLEOTIDE SEQUENCE [LARGE SCALE GENOMIC DNA]</scope>
    <scope>GENOME REANNOTATION</scope>
    <source>
        <strain>B05.10</strain>
    </source>
</reference>
<reference key="3">
    <citation type="journal article" date="2017" name="Mol. Plant Pathol.">
        <title>A gapless genome sequence of the fungus Botrytis cinerea.</title>
        <authorList>
            <person name="van Kan J.A.L."/>
            <person name="Stassen J.H.M."/>
            <person name="Mosbach A."/>
            <person name="van der Lee T.A.J."/>
            <person name="Faino L."/>
            <person name="Farmer A.D."/>
            <person name="Papasotiriou D.G."/>
            <person name="Zhou S."/>
            <person name="Seidl M.F."/>
            <person name="Cottam E."/>
            <person name="Edel D."/>
            <person name="Hahn M."/>
            <person name="Schwartz D.C."/>
            <person name="Dietrich R.A."/>
            <person name="Widdison S."/>
            <person name="Scalliet G."/>
        </authorList>
    </citation>
    <scope>NUCLEOTIDE SEQUENCE [LARGE SCALE GENOMIC DNA]</scope>
    <scope>GENOME REANNOTATION</scope>
    <source>
        <strain>B05.10</strain>
    </source>
</reference>
<gene>
    <name type="ORF">BC1G_09514</name>
    <name type="ORF">BCIN_09g05630</name>
</gene>
<comment type="function">
    <text evidence="1">Aminopeptidase that preferentially cleaves tripeptides. Also has low epoxide hydrolase activity (in vitro). Can hydrolyze an epoxide moiety of LTA(4) to form LTB(4) (in vitro) (By similarity).</text>
</comment>
<comment type="catalytic activity">
    <reaction>
        <text>leukotriene A4 + H2O = leukotriene B4</text>
        <dbReference type="Rhea" id="RHEA:22324"/>
        <dbReference type="ChEBI" id="CHEBI:15377"/>
        <dbReference type="ChEBI" id="CHEBI:57461"/>
        <dbReference type="ChEBI" id="CHEBI:57463"/>
        <dbReference type="EC" id="3.3.2.6"/>
    </reaction>
</comment>
<comment type="cofactor">
    <cofactor evidence="1">
        <name>Zn(2+)</name>
        <dbReference type="ChEBI" id="CHEBI:29105"/>
    </cofactor>
    <text evidence="1">Binds 1 zinc ion per subunit.</text>
</comment>
<comment type="pathway">
    <text>Lipid metabolism; leukotriene B4 biosynthesis.</text>
</comment>
<comment type="subcellular location">
    <subcellularLocation>
        <location evidence="1">Cytoplasm</location>
    </subcellularLocation>
    <subcellularLocation>
        <location evidence="1">Nucleus</location>
    </subcellularLocation>
</comment>
<comment type="similarity">
    <text evidence="4">Belongs to the peptidase M1 family.</text>
</comment>
<feature type="chain" id="PRO_0000324923" description="Leukotriene A-4 hydrolase homolog">
    <location>
        <begin position="1"/>
        <end position="646"/>
    </location>
</feature>
<feature type="active site" description="Proton acceptor" evidence="3">
    <location>
        <position position="337"/>
    </location>
</feature>
<feature type="active site" description="Proton donor" evidence="3">
    <location>
        <position position="424"/>
    </location>
</feature>
<feature type="binding site" evidence="2">
    <location>
        <begin position="172"/>
        <end position="174"/>
    </location>
    <ligand>
        <name>a peptide</name>
        <dbReference type="ChEBI" id="CHEBI:60466"/>
    </ligand>
</feature>
<feature type="binding site" evidence="2">
    <location>
        <begin position="307"/>
        <end position="312"/>
    </location>
    <ligand>
        <name>a peptide</name>
        <dbReference type="ChEBI" id="CHEBI:60466"/>
    </ligand>
</feature>
<feature type="binding site" evidence="3">
    <location>
        <position position="336"/>
    </location>
    <ligand>
        <name>Zn(2+)</name>
        <dbReference type="ChEBI" id="CHEBI:29105"/>
        <note>catalytic</note>
    </ligand>
</feature>
<feature type="binding site" evidence="3">
    <location>
        <position position="340"/>
    </location>
    <ligand>
        <name>Zn(2+)</name>
        <dbReference type="ChEBI" id="CHEBI:29105"/>
        <note>catalytic</note>
    </ligand>
</feature>
<feature type="binding site" evidence="3">
    <location>
        <position position="359"/>
    </location>
    <ligand>
        <name>Zn(2+)</name>
        <dbReference type="ChEBI" id="CHEBI:29105"/>
        <note>catalytic</note>
    </ligand>
</feature>
<name>LKHA4_BOTFB</name>
<evidence type="ECO:0000250" key="1"/>
<evidence type="ECO:0000250" key="2">
    <source>
        <dbReference type="UniProtKB" id="P09960"/>
    </source>
</evidence>
<evidence type="ECO:0000255" key="3">
    <source>
        <dbReference type="PROSITE-ProRule" id="PRU10095"/>
    </source>
</evidence>
<evidence type="ECO:0000305" key="4"/>
<accession>A6SAG8</accession>
<accession>A0A384JT75</accession>
<dbReference type="EC" id="3.3.2.6"/>
<dbReference type="EMBL" id="CP009813">
    <property type="protein sequence ID" value="ATZ53788.1"/>
    <property type="molecule type" value="Genomic_DNA"/>
</dbReference>
<dbReference type="RefSeq" id="XP_001551808.1">
    <property type="nucleotide sequence ID" value="XM_001551758.1"/>
</dbReference>
<dbReference type="SMR" id="A6SAG8"/>
<dbReference type="MEROPS" id="M01.034"/>
<dbReference type="EnsemblFungi" id="Bcin09g05630.1">
    <property type="protein sequence ID" value="Bcin09p05630.1"/>
    <property type="gene ID" value="Bcin09g05630"/>
</dbReference>
<dbReference type="GeneID" id="5432324"/>
<dbReference type="KEGG" id="bfu:BCIN_09g05630"/>
<dbReference type="VEuPathDB" id="FungiDB:Bcin09g05630"/>
<dbReference type="OrthoDB" id="79562at2759"/>
<dbReference type="UniPathway" id="UPA00878"/>
<dbReference type="Proteomes" id="UP000001798">
    <property type="component" value="Chromosome bcin09"/>
</dbReference>
<dbReference type="GO" id="GO:0005829">
    <property type="term" value="C:cytosol"/>
    <property type="evidence" value="ECO:0007669"/>
    <property type="project" value="TreeGrafter"/>
</dbReference>
<dbReference type="GO" id="GO:0000328">
    <property type="term" value="C:fungal-type vacuole lumen"/>
    <property type="evidence" value="ECO:0007669"/>
    <property type="project" value="EnsemblFungi"/>
</dbReference>
<dbReference type="GO" id="GO:0005771">
    <property type="term" value="C:multivesicular body"/>
    <property type="evidence" value="ECO:0007669"/>
    <property type="project" value="EnsemblFungi"/>
</dbReference>
<dbReference type="GO" id="GO:0005634">
    <property type="term" value="C:nucleus"/>
    <property type="evidence" value="ECO:0007669"/>
    <property type="project" value="UniProtKB-SubCell"/>
</dbReference>
<dbReference type="GO" id="GO:0061957">
    <property type="term" value="C:NVT complex"/>
    <property type="evidence" value="ECO:0007669"/>
    <property type="project" value="EnsemblFungi"/>
</dbReference>
<dbReference type="GO" id="GO:0004177">
    <property type="term" value="F:aminopeptidase activity"/>
    <property type="evidence" value="ECO:0000250"/>
    <property type="project" value="UniProtKB"/>
</dbReference>
<dbReference type="GO" id="GO:0004301">
    <property type="term" value="F:epoxide hydrolase activity"/>
    <property type="evidence" value="ECO:0000250"/>
    <property type="project" value="UniProtKB"/>
</dbReference>
<dbReference type="GO" id="GO:0004463">
    <property type="term" value="F:leukotriene-A4 hydrolase activity"/>
    <property type="evidence" value="ECO:0007669"/>
    <property type="project" value="UniProtKB-EC"/>
</dbReference>
<dbReference type="GO" id="GO:0008237">
    <property type="term" value="F:metallopeptidase activity"/>
    <property type="evidence" value="ECO:0007669"/>
    <property type="project" value="UniProtKB-KW"/>
</dbReference>
<dbReference type="GO" id="GO:0008270">
    <property type="term" value="F:zinc ion binding"/>
    <property type="evidence" value="ECO:0000250"/>
    <property type="project" value="UniProtKB"/>
</dbReference>
<dbReference type="GO" id="GO:0120113">
    <property type="term" value="P:cytoplasm to vacuole targeting by the NVT pathway"/>
    <property type="evidence" value="ECO:0007669"/>
    <property type="project" value="EnsemblFungi"/>
</dbReference>
<dbReference type="GO" id="GO:0006629">
    <property type="term" value="P:lipid metabolic process"/>
    <property type="evidence" value="ECO:0007669"/>
    <property type="project" value="EnsemblFungi"/>
</dbReference>
<dbReference type="GO" id="GO:0043171">
    <property type="term" value="P:peptide catabolic process"/>
    <property type="evidence" value="ECO:0000250"/>
    <property type="project" value="UniProtKB"/>
</dbReference>
<dbReference type="GO" id="GO:0030163">
    <property type="term" value="P:protein catabolic process"/>
    <property type="evidence" value="ECO:0007669"/>
    <property type="project" value="EnsemblFungi"/>
</dbReference>
<dbReference type="GO" id="GO:0006508">
    <property type="term" value="P:proteolysis"/>
    <property type="evidence" value="ECO:0007669"/>
    <property type="project" value="UniProtKB-KW"/>
</dbReference>
<dbReference type="CDD" id="cd09599">
    <property type="entry name" value="M1_LTA4H"/>
    <property type="match status" value="1"/>
</dbReference>
<dbReference type="FunFam" id="1.10.390.10:FF:000009">
    <property type="entry name" value="Leukotriene A(4) hydrolase"/>
    <property type="match status" value="1"/>
</dbReference>
<dbReference type="FunFam" id="1.25.40.320:FF:000001">
    <property type="entry name" value="Leukotriene A(4) hydrolase"/>
    <property type="match status" value="1"/>
</dbReference>
<dbReference type="FunFam" id="2.60.40.1730:FF:000004">
    <property type="entry name" value="Leukotriene A(4) hydrolase"/>
    <property type="match status" value="1"/>
</dbReference>
<dbReference type="FunFam" id="3.30.2010.30:FF:000001">
    <property type="entry name" value="Leukotriene A(4) hydrolase"/>
    <property type="match status" value="1"/>
</dbReference>
<dbReference type="Gene3D" id="3.30.2010.30">
    <property type="match status" value="1"/>
</dbReference>
<dbReference type="Gene3D" id="1.10.390.10">
    <property type="entry name" value="Neutral Protease Domain 2"/>
    <property type="match status" value="1"/>
</dbReference>
<dbReference type="Gene3D" id="1.25.40.320">
    <property type="entry name" value="Peptidase M1, leukotriene A4 hydrolase/aminopeptidase C-terminal domain"/>
    <property type="match status" value="1"/>
</dbReference>
<dbReference type="Gene3D" id="2.60.40.1730">
    <property type="entry name" value="tricorn interacting facor f3 domain"/>
    <property type="match status" value="1"/>
</dbReference>
<dbReference type="InterPro" id="IPR045357">
    <property type="entry name" value="Aminopeptidase_N-like_N"/>
</dbReference>
<dbReference type="InterPro" id="IPR042097">
    <property type="entry name" value="Aminopeptidase_N-like_N_sf"/>
</dbReference>
<dbReference type="InterPro" id="IPR016024">
    <property type="entry name" value="ARM-type_fold"/>
</dbReference>
<dbReference type="InterPro" id="IPR012777">
    <property type="entry name" value="LTA4H"/>
</dbReference>
<dbReference type="InterPro" id="IPR049980">
    <property type="entry name" value="LTA4H_cat"/>
</dbReference>
<dbReference type="InterPro" id="IPR038502">
    <property type="entry name" value="M1_LTA-4_hydro/amino_C_sf"/>
</dbReference>
<dbReference type="InterPro" id="IPR034015">
    <property type="entry name" value="M1_LTA4H"/>
</dbReference>
<dbReference type="InterPro" id="IPR001930">
    <property type="entry name" value="Peptidase_M1"/>
</dbReference>
<dbReference type="InterPro" id="IPR015211">
    <property type="entry name" value="Peptidase_M1_C"/>
</dbReference>
<dbReference type="InterPro" id="IPR014782">
    <property type="entry name" value="Peptidase_M1_dom"/>
</dbReference>
<dbReference type="InterPro" id="IPR027268">
    <property type="entry name" value="Peptidase_M4/M1_CTD_sf"/>
</dbReference>
<dbReference type="NCBIfam" id="TIGR02411">
    <property type="entry name" value="leuko_A4_hydro"/>
    <property type="match status" value="1"/>
</dbReference>
<dbReference type="PANTHER" id="PTHR45726">
    <property type="entry name" value="LEUKOTRIENE A-4 HYDROLASE"/>
    <property type="match status" value="1"/>
</dbReference>
<dbReference type="PANTHER" id="PTHR45726:SF3">
    <property type="entry name" value="LEUKOTRIENE A-4 HYDROLASE"/>
    <property type="match status" value="1"/>
</dbReference>
<dbReference type="Pfam" id="PF09127">
    <property type="entry name" value="Leuk-A4-hydro_C"/>
    <property type="match status" value="1"/>
</dbReference>
<dbReference type="Pfam" id="PF01433">
    <property type="entry name" value="Peptidase_M1"/>
    <property type="match status" value="1"/>
</dbReference>
<dbReference type="Pfam" id="PF17900">
    <property type="entry name" value="Peptidase_M1_N"/>
    <property type="match status" value="1"/>
</dbReference>
<dbReference type="PRINTS" id="PR00756">
    <property type="entry name" value="ALADIPTASE"/>
</dbReference>
<dbReference type="SMART" id="SM01263">
    <property type="entry name" value="Leuk-A4-hydro_C"/>
    <property type="match status" value="1"/>
</dbReference>
<dbReference type="SUPFAM" id="SSF48371">
    <property type="entry name" value="ARM repeat"/>
    <property type="match status" value="1"/>
</dbReference>
<dbReference type="SUPFAM" id="SSF63737">
    <property type="entry name" value="Leukotriene A4 hydrolase N-terminal domain"/>
    <property type="match status" value="1"/>
</dbReference>
<dbReference type="SUPFAM" id="SSF55486">
    <property type="entry name" value="Metalloproteases ('zincins'), catalytic domain"/>
    <property type="match status" value="1"/>
</dbReference>
<dbReference type="PROSITE" id="PS00142">
    <property type="entry name" value="ZINC_PROTEASE"/>
    <property type="match status" value="1"/>
</dbReference>
<proteinExistence type="inferred from homology"/>
<sequence length="646" mass="72702">MNTLLSIGRSIITSAPRIVSARQTTVTARTMATVSTINMPRDPNTLSNYNNWRTKHTIADLAIDFTKQRVHGTVTLQLESITDKESEEIILDTSFVDVQSVAVDGNKTGEWTLEKRIEPFGTPLSVKIPGGAAKGTVIALAITLSTTDKCTALQWLTPAQTSNKKFPYMFSQCQAIHNRSIFPCQDTPDVKSTYDFRIRSPLPVLASGLPRGAGSFVHGENGESGTLLYSFYQEIPMPSYLFALASGDIATASIGPRSLVSTGPEELIGAKWELERDTEKFIETIEKIVYPYEWTQYNVLVLPPSFPYGGMENPVFTFATPTIISGDRENVDVVAHELAHSWSGNLVSNASWEHFWLNEGWTVYLERRIIAAVHGEAYRDFSSIIGWKALEDSVKLYGEDHEFTKLIVDLKGKDPDDAFSSVPYEKGFHFLYYLERLVGKPSWDKFIPHYFTTWKKKSLDSYDFKATLLDFFASDSAASKALESVDWDSWFYKPGLPSKPEFDTSLVDKCYALAKKWESKDYTPSPSDIEGWAANQVVVFLQQVQLFTTPLTPVQSQAMGKAYNLVNTKNVELSSRYFGVGLAAKDETVYQPTAELLGKVGRMKFVRTLYRKLVVVDRKLAVETFEKNKDFYHPICRDQVEKDLKE</sequence>